<reference key="1">
    <citation type="journal article" date="2007" name="Appl. Environ. Microbiol.">
        <title>Genome sequence of the cellulolytic gliding bacterium Cytophaga hutchinsonii.</title>
        <authorList>
            <person name="Xie G."/>
            <person name="Bruce D.C."/>
            <person name="Challacombe J.F."/>
            <person name="Chertkov O."/>
            <person name="Detter J.C."/>
            <person name="Gilna P."/>
            <person name="Han C.S."/>
            <person name="Lucas S."/>
            <person name="Misra M."/>
            <person name="Myers G.L."/>
            <person name="Richardson P."/>
            <person name="Tapia R."/>
            <person name="Thayer N."/>
            <person name="Thompson L.S."/>
            <person name="Brettin T.S."/>
            <person name="Henrissat B."/>
            <person name="Wilson D.B."/>
            <person name="McBride M.J."/>
        </authorList>
    </citation>
    <scope>NUCLEOTIDE SEQUENCE [LARGE SCALE GENOMIC DNA]</scope>
    <source>
        <strain>ATCC 33406 / DSM 1761 / JCM 20678 / CIP 103989 / IAM 12607 / NBRC 15051 / NCIMB 9469 / D465</strain>
    </source>
</reference>
<name>NUON_CYTH3</name>
<protein>
    <recommendedName>
        <fullName evidence="1">NADH-quinone oxidoreductase subunit N</fullName>
        <ecNumber evidence="1">7.1.1.-</ecNumber>
    </recommendedName>
    <alternativeName>
        <fullName evidence="1">NADH dehydrogenase I subunit N</fullName>
    </alternativeName>
    <alternativeName>
        <fullName evidence="1">NDH-1 subunit N</fullName>
    </alternativeName>
</protein>
<evidence type="ECO:0000255" key="1">
    <source>
        <dbReference type="HAMAP-Rule" id="MF_00445"/>
    </source>
</evidence>
<gene>
    <name evidence="1" type="primary">nuoN</name>
    <name type="ordered locus">CHU_1369</name>
</gene>
<keyword id="KW-0997">Cell inner membrane</keyword>
<keyword id="KW-1003">Cell membrane</keyword>
<keyword id="KW-0472">Membrane</keyword>
<keyword id="KW-0520">NAD</keyword>
<keyword id="KW-0874">Quinone</keyword>
<keyword id="KW-1185">Reference proteome</keyword>
<keyword id="KW-1278">Translocase</keyword>
<keyword id="KW-0812">Transmembrane</keyword>
<keyword id="KW-1133">Transmembrane helix</keyword>
<keyword id="KW-0813">Transport</keyword>
<feature type="chain" id="PRO_0000391132" description="NADH-quinone oxidoreductase subunit N">
    <location>
        <begin position="1"/>
        <end position="457"/>
    </location>
</feature>
<feature type="transmembrane region" description="Helical" evidence="1">
    <location>
        <begin position="2"/>
        <end position="22"/>
    </location>
</feature>
<feature type="transmembrane region" description="Helical" evidence="1">
    <location>
        <begin position="25"/>
        <end position="45"/>
    </location>
</feature>
<feature type="transmembrane region" description="Helical" evidence="1">
    <location>
        <begin position="60"/>
        <end position="80"/>
    </location>
</feature>
<feature type="transmembrane region" description="Helical" evidence="1">
    <location>
        <begin position="92"/>
        <end position="112"/>
    </location>
</feature>
<feature type="transmembrane region" description="Helical" evidence="1">
    <location>
        <begin position="114"/>
        <end position="134"/>
    </location>
</feature>
<feature type="transmembrane region" description="Helical" evidence="1">
    <location>
        <begin position="149"/>
        <end position="169"/>
    </location>
</feature>
<feature type="transmembrane region" description="Helical" evidence="1">
    <location>
        <begin position="188"/>
        <end position="208"/>
    </location>
</feature>
<feature type="transmembrane region" description="Helical" evidence="1">
    <location>
        <begin position="222"/>
        <end position="242"/>
    </location>
</feature>
<feature type="transmembrane region" description="Helical" evidence="1">
    <location>
        <begin position="253"/>
        <end position="273"/>
    </location>
</feature>
<feature type="transmembrane region" description="Helical" evidence="1">
    <location>
        <begin position="283"/>
        <end position="303"/>
    </location>
</feature>
<feature type="transmembrane region" description="Helical" evidence="1">
    <location>
        <begin position="310"/>
        <end position="330"/>
    </location>
</feature>
<feature type="transmembrane region" description="Helical" evidence="1">
    <location>
        <begin position="353"/>
        <end position="373"/>
    </location>
</feature>
<feature type="transmembrane region" description="Helical" evidence="1">
    <location>
        <begin position="382"/>
        <end position="402"/>
    </location>
</feature>
<feature type="transmembrane region" description="Helical" evidence="1">
    <location>
        <begin position="431"/>
        <end position="451"/>
    </location>
</feature>
<comment type="function">
    <text evidence="1">NDH-1 shuttles electrons from NADH, via FMN and iron-sulfur (Fe-S) centers, to quinones in the respiratory chain. The immediate electron acceptor for the enzyme in this species is believed to be a menaquinone. Couples the redox reaction to proton translocation (for every two electrons transferred, four hydrogen ions are translocated across the cytoplasmic membrane), and thus conserves the redox energy in a proton gradient.</text>
</comment>
<comment type="catalytic activity">
    <reaction evidence="1">
        <text>a quinone + NADH + 5 H(+)(in) = a quinol + NAD(+) + 4 H(+)(out)</text>
        <dbReference type="Rhea" id="RHEA:57888"/>
        <dbReference type="ChEBI" id="CHEBI:15378"/>
        <dbReference type="ChEBI" id="CHEBI:24646"/>
        <dbReference type="ChEBI" id="CHEBI:57540"/>
        <dbReference type="ChEBI" id="CHEBI:57945"/>
        <dbReference type="ChEBI" id="CHEBI:132124"/>
    </reaction>
</comment>
<comment type="subunit">
    <text evidence="1">NDH-1 is composed of 14 different subunits. Subunits NuoA, H, J, K, L, M, N constitute the membrane sector of the complex.</text>
</comment>
<comment type="subcellular location">
    <subcellularLocation>
        <location evidence="1">Cell inner membrane</location>
        <topology evidence="1">Multi-pass membrane protein</topology>
    </subcellularLocation>
</comment>
<comment type="similarity">
    <text evidence="1">Belongs to the complex I subunit 2 family.</text>
</comment>
<proteinExistence type="inferred from homology"/>
<sequence>MNAIILISVLGILSMMSEFIGLKKLIYPIILISLIGILGYNACTFWNNPETHYGMLVHNNYSVAFGSLLITITLFWFILFRSSYSSGEFNQGDHYALILFSTVGGLVLVSFSNMSMLFLGVEILSIPLYILAGSRKKDLHSVESSIKYFILGSFATGIMLLGIALIYGATGSFDFATIEKTASADPLFFIGITLLSIAFAFKVSAVPFHFWVPDVYSGAPTFITAFMSTFVKVAAFGAFYLMLDSIFESVPTYLSHTLIGLSALTIVVGNIAASYQDNVKRMLAFSGVSQAGYMLMVFPILTISAKTSLFVYLAGYAIANLIAIYIVQVVEKSKGDARVENFSGLGKSNPFLAFVLSLSLISLAGIPPAAGFFGKFYLFTEVIHAGNIYLVLIAILGSLISVYYYFKTIIAMYSGEEVSTLTNPAFGFTSVILAIMSALVVLIGLFPDILLQIGMNI</sequence>
<dbReference type="EC" id="7.1.1.-" evidence="1"/>
<dbReference type="EMBL" id="CP000383">
    <property type="protein sequence ID" value="ABG58641.1"/>
    <property type="molecule type" value="Genomic_DNA"/>
</dbReference>
<dbReference type="RefSeq" id="WP_011584756.1">
    <property type="nucleotide sequence ID" value="NC_008255.1"/>
</dbReference>
<dbReference type="SMR" id="Q11VC5"/>
<dbReference type="STRING" id="269798.CHU_1369"/>
<dbReference type="KEGG" id="chu:CHU_1369"/>
<dbReference type="eggNOG" id="COG1007">
    <property type="taxonomic scope" value="Bacteria"/>
</dbReference>
<dbReference type="HOGENOM" id="CLU_007100_1_3_10"/>
<dbReference type="OrthoDB" id="9811718at2"/>
<dbReference type="Proteomes" id="UP000001822">
    <property type="component" value="Chromosome"/>
</dbReference>
<dbReference type="GO" id="GO:0005886">
    <property type="term" value="C:plasma membrane"/>
    <property type="evidence" value="ECO:0007669"/>
    <property type="project" value="UniProtKB-SubCell"/>
</dbReference>
<dbReference type="GO" id="GO:0008137">
    <property type="term" value="F:NADH dehydrogenase (ubiquinone) activity"/>
    <property type="evidence" value="ECO:0007669"/>
    <property type="project" value="InterPro"/>
</dbReference>
<dbReference type="GO" id="GO:0050136">
    <property type="term" value="F:NADH:ubiquinone reductase (non-electrogenic) activity"/>
    <property type="evidence" value="ECO:0007669"/>
    <property type="project" value="UniProtKB-UniRule"/>
</dbReference>
<dbReference type="GO" id="GO:0048038">
    <property type="term" value="F:quinone binding"/>
    <property type="evidence" value="ECO:0007669"/>
    <property type="project" value="UniProtKB-KW"/>
</dbReference>
<dbReference type="GO" id="GO:0042773">
    <property type="term" value="P:ATP synthesis coupled electron transport"/>
    <property type="evidence" value="ECO:0007669"/>
    <property type="project" value="InterPro"/>
</dbReference>
<dbReference type="HAMAP" id="MF_00445">
    <property type="entry name" value="NDH1_NuoN_1"/>
    <property type="match status" value="1"/>
</dbReference>
<dbReference type="InterPro" id="IPR010096">
    <property type="entry name" value="NADH-Q_OxRdtase_suN/2"/>
</dbReference>
<dbReference type="InterPro" id="IPR001750">
    <property type="entry name" value="ND/Mrp_TM"/>
</dbReference>
<dbReference type="NCBIfam" id="TIGR01770">
    <property type="entry name" value="NDH_I_N"/>
    <property type="match status" value="1"/>
</dbReference>
<dbReference type="PANTHER" id="PTHR22773">
    <property type="entry name" value="NADH DEHYDROGENASE"/>
    <property type="match status" value="1"/>
</dbReference>
<dbReference type="Pfam" id="PF00361">
    <property type="entry name" value="Proton_antipo_M"/>
    <property type="match status" value="1"/>
</dbReference>
<organism>
    <name type="scientific">Cytophaga hutchinsonii (strain ATCC 33406 / DSM 1761 / CIP 103989 / NBRC 15051 / NCIMB 9469 / D465)</name>
    <dbReference type="NCBI Taxonomy" id="269798"/>
    <lineage>
        <taxon>Bacteria</taxon>
        <taxon>Pseudomonadati</taxon>
        <taxon>Bacteroidota</taxon>
        <taxon>Cytophagia</taxon>
        <taxon>Cytophagales</taxon>
        <taxon>Cytophagaceae</taxon>
        <taxon>Cytophaga</taxon>
    </lineage>
</organism>
<accession>Q11VC5</accession>